<keyword id="KW-0378">Hydrolase</keyword>
<keyword id="KW-0479">Metal-binding</keyword>
<keyword id="KW-0482">Metalloprotease</keyword>
<keyword id="KW-0645">Protease</keyword>
<keyword id="KW-1185">Reference proteome</keyword>
<keyword id="KW-0862">Zinc</keyword>
<protein>
    <recommendedName>
        <fullName>UPF0758 protein Shew_3481</fullName>
    </recommendedName>
</protein>
<organism>
    <name type="scientific">Shewanella loihica (strain ATCC BAA-1088 / PV-4)</name>
    <dbReference type="NCBI Taxonomy" id="323850"/>
    <lineage>
        <taxon>Bacteria</taxon>
        <taxon>Pseudomonadati</taxon>
        <taxon>Pseudomonadota</taxon>
        <taxon>Gammaproteobacteria</taxon>
        <taxon>Alteromonadales</taxon>
        <taxon>Shewanellaceae</taxon>
        <taxon>Shewanella</taxon>
    </lineage>
</organism>
<sequence>MAIKDWPQGEGPREKLLRSGVAQLSDAELLAVLLRNGLKGQSAVSLARVMLTHFGGLRALFSASLSELCDIQGIGPVKYAQLQAAIELSKRIAQENLQRGKILSDPDLTRDYLMRQLADRAYEVFAILLLDSQHRVIQFVELFRGTIDSASVYPREVVSLVLEKKAAAVIVCHNHPSGGAEPSHADRRITERLKYALATIDVSLLDHMVVGDREIVSFAERGWID</sequence>
<proteinExistence type="inferred from homology"/>
<feature type="chain" id="PRO_0000322702" description="UPF0758 protein Shew_3481">
    <location>
        <begin position="1"/>
        <end position="225"/>
    </location>
</feature>
<feature type="domain" description="MPN" evidence="1">
    <location>
        <begin position="102"/>
        <end position="224"/>
    </location>
</feature>
<feature type="short sequence motif" description="JAMM motif" evidence="1">
    <location>
        <begin position="173"/>
        <end position="186"/>
    </location>
</feature>
<feature type="binding site" evidence="1">
    <location>
        <position position="173"/>
    </location>
    <ligand>
        <name>Zn(2+)</name>
        <dbReference type="ChEBI" id="CHEBI:29105"/>
        <note>catalytic</note>
    </ligand>
</feature>
<feature type="binding site" evidence="1">
    <location>
        <position position="175"/>
    </location>
    <ligand>
        <name>Zn(2+)</name>
        <dbReference type="ChEBI" id="CHEBI:29105"/>
        <note>catalytic</note>
    </ligand>
</feature>
<feature type="binding site" evidence="1">
    <location>
        <position position="186"/>
    </location>
    <ligand>
        <name>Zn(2+)</name>
        <dbReference type="ChEBI" id="CHEBI:29105"/>
        <note>catalytic</note>
    </ligand>
</feature>
<gene>
    <name type="ordered locus">Shew_3481</name>
</gene>
<accession>A3QIP9</accession>
<name>Y3481_SHELP</name>
<evidence type="ECO:0000255" key="1">
    <source>
        <dbReference type="PROSITE-ProRule" id="PRU01182"/>
    </source>
</evidence>
<evidence type="ECO:0000305" key="2"/>
<comment type="similarity">
    <text evidence="2">Belongs to the UPF0758 family.</text>
</comment>
<comment type="sequence caution" evidence="2">
    <conflict type="erroneous initiation">
        <sequence resource="EMBL-CDS" id="ABO25347"/>
    </conflict>
</comment>
<reference key="1">
    <citation type="submission" date="2007-03" db="EMBL/GenBank/DDBJ databases">
        <title>Complete sequence of Shewanella loihica PV-4.</title>
        <authorList>
            <consortium name="US DOE Joint Genome Institute"/>
            <person name="Copeland A."/>
            <person name="Lucas S."/>
            <person name="Lapidus A."/>
            <person name="Barry K."/>
            <person name="Detter J.C."/>
            <person name="Glavina del Rio T."/>
            <person name="Hammon N."/>
            <person name="Israni S."/>
            <person name="Dalin E."/>
            <person name="Tice H."/>
            <person name="Pitluck S."/>
            <person name="Chain P."/>
            <person name="Malfatti S."/>
            <person name="Shin M."/>
            <person name="Vergez L."/>
            <person name="Schmutz J."/>
            <person name="Larimer F."/>
            <person name="Land M."/>
            <person name="Hauser L."/>
            <person name="Kyrpides N."/>
            <person name="Mikhailova N."/>
            <person name="Romine M.F."/>
            <person name="Serres G."/>
            <person name="Fredrickson J."/>
            <person name="Tiedje J."/>
            <person name="Richardson P."/>
        </authorList>
    </citation>
    <scope>NUCLEOTIDE SEQUENCE [LARGE SCALE GENOMIC DNA]</scope>
    <source>
        <strain>ATCC BAA-1088 / PV-4</strain>
    </source>
</reference>
<dbReference type="EMBL" id="CP000606">
    <property type="protein sequence ID" value="ABO25347.1"/>
    <property type="status" value="ALT_INIT"/>
    <property type="molecule type" value="Genomic_DNA"/>
</dbReference>
<dbReference type="RefSeq" id="WP_041406764.1">
    <property type="nucleotide sequence ID" value="NC_009092.1"/>
</dbReference>
<dbReference type="SMR" id="A3QIP9"/>
<dbReference type="STRING" id="323850.Shew_3481"/>
<dbReference type="KEGG" id="slo:Shew_3481"/>
<dbReference type="eggNOG" id="COG2003">
    <property type="taxonomic scope" value="Bacteria"/>
</dbReference>
<dbReference type="HOGENOM" id="CLU_073529_0_2_6"/>
<dbReference type="OrthoDB" id="9804482at2"/>
<dbReference type="Proteomes" id="UP000001558">
    <property type="component" value="Chromosome"/>
</dbReference>
<dbReference type="GO" id="GO:0046872">
    <property type="term" value="F:metal ion binding"/>
    <property type="evidence" value="ECO:0007669"/>
    <property type="project" value="UniProtKB-KW"/>
</dbReference>
<dbReference type="GO" id="GO:0008237">
    <property type="term" value="F:metallopeptidase activity"/>
    <property type="evidence" value="ECO:0007669"/>
    <property type="project" value="UniProtKB-KW"/>
</dbReference>
<dbReference type="GO" id="GO:0006508">
    <property type="term" value="P:proteolysis"/>
    <property type="evidence" value="ECO:0007669"/>
    <property type="project" value="UniProtKB-KW"/>
</dbReference>
<dbReference type="CDD" id="cd08071">
    <property type="entry name" value="MPN_DUF2466"/>
    <property type="match status" value="1"/>
</dbReference>
<dbReference type="FunFam" id="3.40.140.10:FF:000032">
    <property type="entry name" value="DNA repair protein RadC"/>
    <property type="match status" value="1"/>
</dbReference>
<dbReference type="Gene3D" id="1.10.150.20">
    <property type="entry name" value="5' to 3' exonuclease, C-terminal subdomain"/>
    <property type="match status" value="1"/>
</dbReference>
<dbReference type="Gene3D" id="3.40.140.10">
    <property type="entry name" value="Cytidine Deaminase, domain 2"/>
    <property type="match status" value="1"/>
</dbReference>
<dbReference type="InterPro" id="IPR037518">
    <property type="entry name" value="MPN"/>
</dbReference>
<dbReference type="InterPro" id="IPR025657">
    <property type="entry name" value="RadC_JAB"/>
</dbReference>
<dbReference type="InterPro" id="IPR010994">
    <property type="entry name" value="RuvA_2-like"/>
</dbReference>
<dbReference type="InterPro" id="IPR001405">
    <property type="entry name" value="UPF0758"/>
</dbReference>
<dbReference type="InterPro" id="IPR020891">
    <property type="entry name" value="UPF0758_CS"/>
</dbReference>
<dbReference type="InterPro" id="IPR046778">
    <property type="entry name" value="UPF0758_N"/>
</dbReference>
<dbReference type="NCBIfam" id="NF000642">
    <property type="entry name" value="PRK00024.1"/>
    <property type="match status" value="1"/>
</dbReference>
<dbReference type="NCBIfam" id="TIGR00608">
    <property type="entry name" value="radc"/>
    <property type="match status" value="1"/>
</dbReference>
<dbReference type="PANTHER" id="PTHR30471">
    <property type="entry name" value="DNA REPAIR PROTEIN RADC"/>
    <property type="match status" value="1"/>
</dbReference>
<dbReference type="PANTHER" id="PTHR30471:SF3">
    <property type="entry name" value="UPF0758 PROTEIN YEES-RELATED"/>
    <property type="match status" value="1"/>
</dbReference>
<dbReference type="Pfam" id="PF04002">
    <property type="entry name" value="RadC"/>
    <property type="match status" value="1"/>
</dbReference>
<dbReference type="Pfam" id="PF20582">
    <property type="entry name" value="UPF0758_N"/>
    <property type="match status" value="1"/>
</dbReference>
<dbReference type="SUPFAM" id="SSF102712">
    <property type="entry name" value="JAB1/MPN domain"/>
    <property type="match status" value="1"/>
</dbReference>
<dbReference type="SUPFAM" id="SSF47781">
    <property type="entry name" value="RuvA domain 2-like"/>
    <property type="match status" value="1"/>
</dbReference>
<dbReference type="PROSITE" id="PS50249">
    <property type="entry name" value="MPN"/>
    <property type="match status" value="1"/>
</dbReference>
<dbReference type="PROSITE" id="PS01302">
    <property type="entry name" value="UPF0758"/>
    <property type="match status" value="1"/>
</dbReference>